<dbReference type="EMBL" id="CR628336">
    <property type="protein sequence ID" value="CAH13920.1"/>
    <property type="molecule type" value="Genomic_DNA"/>
</dbReference>
<dbReference type="RefSeq" id="WP_010948412.1">
    <property type="nucleotide sequence ID" value="NC_006368.1"/>
</dbReference>
<dbReference type="SMR" id="Q5X1H6"/>
<dbReference type="GeneID" id="57036713"/>
<dbReference type="KEGG" id="lpp:lpp2767"/>
<dbReference type="LegioList" id="lpp2767"/>
<dbReference type="HOGENOM" id="CLU_123265_0_1_6"/>
<dbReference type="GO" id="GO:1990904">
    <property type="term" value="C:ribonucleoprotein complex"/>
    <property type="evidence" value="ECO:0007669"/>
    <property type="project" value="UniProtKB-KW"/>
</dbReference>
<dbReference type="GO" id="GO:0005840">
    <property type="term" value="C:ribosome"/>
    <property type="evidence" value="ECO:0007669"/>
    <property type="project" value="UniProtKB-KW"/>
</dbReference>
<dbReference type="GO" id="GO:0019843">
    <property type="term" value="F:rRNA binding"/>
    <property type="evidence" value="ECO:0007669"/>
    <property type="project" value="UniProtKB-UniRule"/>
</dbReference>
<dbReference type="GO" id="GO:0003735">
    <property type="term" value="F:structural constituent of ribosome"/>
    <property type="evidence" value="ECO:0007669"/>
    <property type="project" value="InterPro"/>
</dbReference>
<dbReference type="GO" id="GO:0000027">
    <property type="term" value="P:ribosomal large subunit assembly"/>
    <property type="evidence" value="ECO:0007669"/>
    <property type="project" value="UniProtKB-UniRule"/>
</dbReference>
<dbReference type="GO" id="GO:0006412">
    <property type="term" value="P:translation"/>
    <property type="evidence" value="ECO:0007669"/>
    <property type="project" value="InterPro"/>
</dbReference>
<dbReference type="CDD" id="cd07026">
    <property type="entry name" value="Ribosomal_L20"/>
    <property type="match status" value="1"/>
</dbReference>
<dbReference type="FunFam" id="1.10.1900.20:FF:000001">
    <property type="entry name" value="50S ribosomal protein L20"/>
    <property type="match status" value="1"/>
</dbReference>
<dbReference type="Gene3D" id="6.10.160.10">
    <property type="match status" value="1"/>
</dbReference>
<dbReference type="Gene3D" id="1.10.1900.20">
    <property type="entry name" value="Ribosomal protein L20"/>
    <property type="match status" value="1"/>
</dbReference>
<dbReference type="HAMAP" id="MF_00382">
    <property type="entry name" value="Ribosomal_bL20"/>
    <property type="match status" value="1"/>
</dbReference>
<dbReference type="InterPro" id="IPR005813">
    <property type="entry name" value="Ribosomal_bL20"/>
</dbReference>
<dbReference type="InterPro" id="IPR049946">
    <property type="entry name" value="RIBOSOMAL_L20_CS"/>
</dbReference>
<dbReference type="InterPro" id="IPR035566">
    <property type="entry name" value="Ribosomal_protein_bL20_C"/>
</dbReference>
<dbReference type="NCBIfam" id="TIGR01032">
    <property type="entry name" value="rplT_bact"/>
    <property type="match status" value="1"/>
</dbReference>
<dbReference type="PANTHER" id="PTHR10986">
    <property type="entry name" value="39S RIBOSOMAL PROTEIN L20"/>
    <property type="match status" value="1"/>
</dbReference>
<dbReference type="Pfam" id="PF00453">
    <property type="entry name" value="Ribosomal_L20"/>
    <property type="match status" value="1"/>
</dbReference>
<dbReference type="PRINTS" id="PR00062">
    <property type="entry name" value="RIBOSOMALL20"/>
</dbReference>
<dbReference type="SUPFAM" id="SSF74731">
    <property type="entry name" value="Ribosomal protein L20"/>
    <property type="match status" value="1"/>
</dbReference>
<dbReference type="PROSITE" id="PS00937">
    <property type="entry name" value="RIBOSOMAL_L20"/>
    <property type="match status" value="1"/>
</dbReference>
<comment type="function">
    <text evidence="1">Binds directly to 23S ribosomal RNA and is necessary for the in vitro assembly process of the 50S ribosomal subunit. It is not involved in the protein synthesizing functions of that subunit.</text>
</comment>
<comment type="similarity">
    <text evidence="1">Belongs to the bacterial ribosomal protein bL20 family.</text>
</comment>
<organism>
    <name type="scientific">Legionella pneumophila (strain Paris)</name>
    <dbReference type="NCBI Taxonomy" id="297246"/>
    <lineage>
        <taxon>Bacteria</taxon>
        <taxon>Pseudomonadati</taxon>
        <taxon>Pseudomonadota</taxon>
        <taxon>Gammaproteobacteria</taxon>
        <taxon>Legionellales</taxon>
        <taxon>Legionellaceae</taxon>
        <taxon>Legionella</taxon>
    </lineage>
</organism>
<keyword id="KW-0687">Ribonucleoprotein</keyword>
<keyword id="KW-0689">Ribosomal protein</keyword>
<keyword id="KW-0694">RNA-binding</keyword>
<keyword id="KW-0699">rRNA-binding</keyword>
<proteinExistence type="inferred from homology"/>
<reference key="1">
    <citation type="journal article" date="2004" name="Nat. Genet.">
        <title>Evidence in the Legionella pneumophila genome for exploitation of host cell functions and high genome plasticity.</title>
        <authorList>
            <person name="Cazalet C."/>
            <person name="Rusniok C."/>
            <person name="Brueggemann H."/>
            <person name="Zidane N."/>
            <person name="Magnier A."/>
            <person name="Ma L."/>
            <person name="Tichit M."/>
            <person name="Jarraud S."/>
            <person name="Bouchier C."/>
            <person name="Vandenesch F."/>
            <person name="Kunst F."/>
            <person name="Etienne J."/>
            <person name="Glaser P."/>
            <person name="Buchrieser C."/>
        </authorList>
    </citation>
    <scope>NUCLEOTIDE SEQUENCE [LARGE SCALE GENOMIC DNA]</scope>
    <source>
        <strain>Paris</strain>
    </source>
</reference>
<name>RL20_LEGPA</name>
<evidence type="ECO:0000255" key="1">
    <source>
        <dbReference type="HAMAP-Rule" id="MF_00382"/>
    </source>
</evidence>
<evidence type="ECO:0000305" key="2"/>
<feature type="chain" id="PRO_0000243695" description="Large ribosomal subunit protein bL20">
    <location>
        <begin position="1"/>
        <end position="119"/>
    </location>
</feature>
<accession>Q5X1H6</accession>
<sequence length="119" mass="13461">MPRVKRGVTAKARHKKILDQAKGYYGARSRTYRVAKQAVIKAGQYAYRDRRQKKRQFRALWITRINAQARECGLSYSRLIDGLKKASIELDRKILADMAVHDKVAFAAIAEQAKAALAG</sequence>
<gene>
    <name evidence="1" type="primary">rplT</name>
    <name type="ordered locus">lpp2767</name>
</gene>
<protein>
    <recommendedName>
        <fullName evidence="1">Large ribosomal subunit protein bL20</fullName>
    </recommendedName>
    <alternativeName>
        <fullName evidence="2">50S ribosomal protein L20</fullName>
    </alternativeName>
</protein>